<organism>
    <name type="scientific">Cyanothece sp. (strain PCC 7425 / ATCC 29141)</name>
    <dbReference type="NCBI Taxonomy" id="395961"/>
    <lineage>
        <taxon>Bacteria</taxon>
        <taxon>Bacillati</taxon>
        <taxon>Cyanobacteriota</taxon>
        <taxon>Cyanophyceae</taxon>
        <taxon>Gomontiellales</taxon>
        <taxon>Cyanothecaceae</taxon>
        <taxon>Cyanothece</taxon>
    </lineage>
</organism>
<keyword id="KW-0456">Lyase</keyword>
<protein>
    <recommendedName>
        <fullName evidence="1">Putative pterin-4-alpha-carbinolamine dehydratase</fullName>
        <shortName evidence="1">PHS</shortName>
        <ecNumber evidence="1">4.2.1.96</ecNumber>
    </recommendedName>
    <alternativeName>
        <fullName evidence="1">4-alpha-hydroxy-tetrahydropterin dehydratase</fullName>
    </alternativeName>
    <alternativeName>
        <fullName evidence="1">Pterin carbinolamine dehydratase</fullName>
        <shortName evidence="1">PCD</shortName>
    </alternativeName>
</protein>
<accession>B8HU56</accession>
<gene>
    <name type="ordered locus">Cyan7425_2038</name>
</gene>
<proteinExistence type="inferred from homology"/>
<sequence>MAQLLSDIEINSQIGQLPDWSVVGQEIQMVRKFKDFIAAIDFVNKLVEPAEAAGHHPDIAISYNKVTITLTTHDAGGLTQKDFDLAQVISQLSRIWV</sequence>
<name>PHS_CYAP4</name>
<reference key="1">
    <citation type="journal article" date="2011" name="MBio">
        <title>Novel metabolic attributes of the genus Cyanothece, comprising a group of unicellular nitrogen-fixing Cyanobacteria.</title>
        <authorList>
            <person name="Bandyopadhyay A."/>
            <person name="Elvitigala T."/>
            <person name="Welsh E."/>
            <person name="Stockel J."/>
            <person name="Liberton M."/>
            <person name="Min H."/>
            <person name="Sherman L.A."/>
            <person name="Pakrasi H.B."/>
        </authorList>
    </citation>
    <scope>NUCLEOTIDE SEQUENCE [LARGE SCALE GENOMIC DNA]</scope>
    <source>
        <strain>PCC 7425 / ATCC 29141</strain>
    </source>
</reference>
<evidence type="ECO:0000255" key="1">
    <source>
        <dbReference type="HAMAP-Rule" id="MF_00434"/>
    </source>
</evidence>
<comment type="catalytic activity">
    <reaction evidence="1">
        <text>(4aS,6R)-4a-hydroxy-L-erythro-5,6,7,8-tetrahydrobiopterin = (6R)-L-erythro-6,7-dihydrobiopterin + H2O</text>
        <dbReference type="Rhea" id="RHEA:11920"/>
        <dbReference type="ChEBI" id="CHEBI:15377"/>
        <dbReference type="ChEBI" id="CHEBI:15642"/>
        <dbReference type="ChEBI" id="CHEBI:43120"/>
        <dbReference type="EC" id="4.2.1.96"/>
    </reaction>
</comment>
<comment type="similarity">
    <text evidence="1">Belongs to the pterin-4-alpha-carbinolamine dehydratase family.</text>
</comment>
<dbReference type="EC" id="4.2.1.96" evidence="1"/>
<dbReference type="EMBL" id="CP001344">
    <property type="protein sequence ID" value="ACL44401.1"/>
    <property type="molecule type" value="Genomic_DNA"/>
</dbReference>
<dbReference type="SMR" id="B8HU56"/>
<dbReference type="STRING" id="395961.Cyan7425_2038"/>
<dbReference type="KEGG" id="cyn:Cyan7425_2038"/>
<dbReference type="eggNOG" id="COG2154">
    <property type="taxonomic scope" value="Bacteria"/>
</dbReference>
<dbReference type="HOGENOM" id="CLU_081974_4_0_3"/>
<dbReference type="OrthoDB" id="9794987at2"/>
<dbReference type="GO" id="GO:0008124">
    <property type="term" value="F:4-alpha-hydroxytetrahydrobiopterin dehydratase activity"/>
    <property type="evidence" value="ECO:0007669"/>
    <property type="project" value="UniProtKB-UniRule"/>
</dbReference>
<dbReference type="GO" id="GO:0006729">
    <property type="term" value="P:tetrahydrobiopterin biosynthetic process"/>
    <property type="evidence" value="ECO:0007669"/>
    <property type="project" value="InterPro"/>
</dbReference>
<dbReference type="CDD" id="cd00488">
    <property type="entry name" value="PCD_DCoH"/>
    <property type="match status" value="1"/>
</dbReference>
<dbReference type="Gene3D" id="3.30.1360.20">
    <property type="entry name" value="Transcriptional coactivator/pterin dehydratase"/>
    <property type="match status" value="1"/>
</dbReference>
<dbReference type="HAMAP" id="MF_00434">
    <property type="entry name" value="Pterin_4_alpha"/>
    <property type="match status" value="1"/>
</dbReference>
<dbReference type="InterPro" id="IPR036428">
    <property type="entry name" value="PCD_sf"/>
</dbReference>
<dbReference type="InterPro" id="IPR001533">
    <property type="entry name" value="Pterin_deHydtase"/>
</dbReference>
<dbReference type="NCBIfam" id="NF002017">
    <property type="entry name" value="PRK00823.1-2"/>
    <property type="match status" value="1"/>
</dbReference>
<dbReference type="PANTHER" id="PTHR12599">
    <property type="entry name" value="PTERIN-4-ALPHA-CARBINOLAMINE DEHYDRATASE"/>
    <property type="match status" value="1"/>
</dbReference>
<dbReference type="PANTHER" id="PTHR12599:SF0">
    <property type="entry name" value="PTERIN-4-ALPHA-CARBINOLAMINE DEHYDRATASE"/>
    <property type="match status" value="1"/>
</dbReference>
<dbReference type="Pfam" id="PF01329">
    <property type="entry name" value="Pterin_4a"/>
    <property type="match status" value="1"/>
</dbReference>
<dbReference type="SUPFAM" id="SSF55248">
    <property type="entry name" value="PCD-like"/>
    <property type="match status" value="1"/>
</dbReference>
<feature type="chain" id="PRO_1000134950" description="Putative pterin-4-alpha-carbinolamine dehydratase">
    <location>
        <begin position="1"/>
        <end position="97"/>
    </location>
</feature>